<accession>P15863</accession>
<accession>B4E0D6</accession>
<accession>Q642X9</accession>
<accession>Q6NTC0</accession>
<accession>Q9Y558</accession>
<gene>
    <name type="primary">PAX1</name>
    <name type="synonym">HUP48</name>
</gene>
<feature type="chain" id="PRO_0000050172" description="Paired box protein Pax-1">
    <location>
        <begin position="1"/>
        <end position="534"/>
    </location>
</feature>
<feature type="DNA-binding region" description="Paired" evidence="2">
    <location>
        <begin position="98"/>
        <end position="224"/>
    </location>
</feature>
<feature type="region of interest" description="PAI subdomain" evidence="2">
    <location>
        <begin position="101"/>
        <end position="157"/>
    </location>
</feature>
<feature type="region of interest" description="RED subdomain" evidence="2">
    <location>
        <begin position="176"/>
        <end position="224"/>
    </location>
</feature>
<feature type="region of interest" description="Disordered" evidence="3">
    <location>
        <begin position="424"/>
        <end position="480"/>
    </location>
</feature>
<feature type="region of interest" description="Disordered" evidence="3">
    <location>
        <begin position="492"/>
        <end position="511"/>
    </location>
</feature>
<feature type="splice variant" id="VSP_039095" description="In isoform 2 and isoform 3." evidence="7">
    <original>MKFTLGLGSRAWRVSWEGAAAAAAGPGAGGSALRCRAQRVSSPRLGRRGSRLSGALPLCLSRGGGGAQALPDCAGPSPGHPGHPGARQLAGPLAM</original>
    <variation>MRRAPLRGSSAPLPTPSQTQAVCPWTPSCLGTHRSPLEVRLGAVPRSAWGPLANPPGVFSPSGSLLSGASA</variation>
    <location>
        <begin position="1"/>
        <end position="95"/>
    </location>
</feature>
<feature type="splice variant" id="VSP_039096" description="In isoform 2." evidence="7">
    <original>GSLPAPAARPRTPSVAYTDCPSRPRPPRGSSPRTRARRERQADPGAQVCAAAPAIGTGRIGGLAEEEASAGPRGARPASPQAQPCLWPDPPHFLYWSGFLGFSELGF</original>
    <variation>VADRKPPSSGSKAPDALSSLHGLPIPASTS</variation>
    <location>
        <begin position="428"/>
        <end position="534"/>
    </location>
</feature>
<feature type="sequence variant" id="VAR_003787" description="Found in a patient with neural tube defects; uncertain significance; dbSNP:rs760806868." evidence="5">
    <original>Q</original>
    <variation>H</variation>
    <location>
        <position position="139"/>
    </location>
</feature>
<feature type="sequence variant" id="VAR_070922" description="In OTFCS2; significantly reduced transactivation of the regulatory sequence of NKX3-2 in cells over-expressing the mutant sequence compared to cells over-expressing wild-type sequence; dbSNP:rs540296842." evidence="4">
    <original>G</original>
    <variation>V</variation>
    <location>
        <position position="166"/>
    </location>
</feature>
<feature type="sequence variant" id="VAR_055369" description="In dbSNP:rs17861058." evidence="6">
    <original>T</original>
    <variation>R</variation>
    <location>
        <position position="439"/>
    </location>
</feature>
<feature type="sequence variant" id="VAR_055370" description="In dbSNP:rs17861059." evidence="6">
    <original>P</original>
    <variation>L</variation>
    <location>
        <position position="453"/>
    </location>
</feature>
<feature type="sequence variant" id="VAR_055371" description="In dbSNP:rs17861061." evidence="6">
    <original>P</original>
    <variation>L</variation>
    <location>
        <position position="504"/>
    </location>
</feature>
<evidence type="ECO:0000250" key="1"/>
<evidence type="ECO:0000255" key="2">
    <source>
        <dbReference type="PROSITE-ProRule" id="PRU00381"/>
    </source>
</evidence>
<evidence type="ECO:0000256" key="3">
    <source>
        <dbReference type="SAM" id="MobiDB-lite"/>
    </source>
</evidence>
<evidence type="ECO:0000269" key="4">
    <source>
    </source>
</evidence>
<evidence type="ECO:0000269" key="5">
    <source>
    </source>
</evidence>
<evidence type="ECO:0000269" key="6">
    <source ref="2"/>
</evidence>
<evidence type="ECO:0000303" key="7">
    <source>
    </source>
</evidence>
<evidence type="ECO:0000305" key="8"/>
<proteinExistence type="evidence at protein level"/>
<protein>
    <recommendedName>
        <fullName>Paired box protein Pax-1</fullName>
    </recommendedName>
    <alternativeName>
        <fullName>HuP48</fullName>
    </alternativeName>
</protein>
<sequence length="534" mass="55499">MKFTLGLGSRAWRVSWEGAAAAAAGPGAGGSALRCRAQRVSSPRLGRRGSRLSGALPLCLSRGGGGAQALPDCAGPSPGHPGHPGARQLAGPLAMEQTYGEVNQLGGVFVNGRPLPNAIRLRIVELAQLGIRPCDISRQLRVSHGCVSKILARYNETGSILPGAIGGSKPRVTTPNVVKHIRDYKQGDPGIFAWEIRDRLLADGVCDKYNVPSVSSISRILRNKIGSLAQPGPYEASKQPPSQPTLPYNHIYQYPYPSPVSPTGAKMGSHPGVPGTAGHVSIPRSWPSAHSVSNILGIRTFMEQTGALAGSEGTAYSPKMEDWAGVNRTAFPATPAVNGLEKPALEADIKYTQSASTLSAVGGFLPACAYPASNQHGVYSAPGGGYLAPGPPWPPAQGPPLAPPGAGVAVHGGELAAAMTFKHPSREGSLPAPAARPRTPSVAYTDCPSRPRPPRGSSPRTRARRERQADPGAQVCAAAPAIGTGRIGGLAEEEASAGPRGARPASPQAQPCLWPDPPHFLYWSGFLGFSELGF</sequence>
<organism>
    <name type="scientific">Homo sapiens</name>
    <name type="common">Human</name>
    <dbReference type="NCBI Taxonomy" id="9606"/>
    <lineage>
        <taxon>Eukaryota</taxon>
        <taxon>Metazoa</taxon>
        <taxon>Chordata</taxon>
        <taxon>Craniata</taxon>
        <taxon>Vertebrata</taxon>
        <taxon>Euteleostomi</taxon>
        <taxon>Mammalia</taxon>
        <taxon>Eutheria</taxon>
        <taxon>Euarchontoglires</taxon>
        <taxon>Primates</taxon>
        <taxon>Haplorrhini</taxon>
        <taxon>Catarrhini</taxon>
        <taxon>Hominidae</taxon>
        <taxon>Homo</taxon>
    </lineage>
</organism>
<comment type="function">
    <text evidence="1">This protein is a transcriptional activator. It may play a role in the formation of segmented structures of the embryo. May play an important role in the normal development of the vertebral column (By similarity).</text>
</comment>
<comment type="subcellular location">
    <subcellularLocation>
        <location>Nucleus</location>
    </subcellularLocation>
</comment>
<comment type="alternative products">
    <event type="alternative splicing"/>
    <isoform>
        <id>P15863-1</id>
        <name>1</name>
        <sequence type="displayed"/>
    </isoform>
    <isoform>
        <id>P15863-2</id>
        <name>2</name>
        <sequence type="described" ref="VSP_039095 VSP_039096"/>
    </isoform>
    <isoform>
        <id>P15863-3</id>
        <name>3</name>
        <sequence type="described" ref="VSP_039095"/>
    </isoform>
</comment>
<comment type="disease" evidence="4">
    <disease id="DI-03986">
        <name>Otofaciocervical syndrome 2, with T-cell deficiency</name>
        <acronym>OTFCS2</acronym>
        <description>An autosomal recessive disorder characterized by facial dysmorphism, cup-shaped low-set ears, preauricular fistulas, hearing loss, branchial defects, skeletal anomalies including vertebral defects, low-set clavicles, winged scapulae, sloping shoulders, and mild intellectual disability. Some patients also exhibit altered thymus development with T-cell immunodeficiency.</description>
        <dbReference type="MIM" id="615560"/>
    </disease>
    <text>The disease is caused by variants affecting the gene represented in this entry.</text>
</comment>
<comment type="sequence caution" evidence="8">
    <conflict type="erroneous initiation">
        <sequence resource="EMBL-CDS" id="AAH69134"/>
    </conflict>
    <text>Truncated N-terminus.</text>
</comment>
<comment type="sequence caution" evidence="8">
    <conflict type="erroneous initiation">
        <sequence resource="EMBL-CDS" id="AAU21037"/>
    </conflict>
    <text>Truncated N-terminus.</text>
</comment>
<keyword id="KW-0010">Activator</keyword>
<keyword id="KW-0025">Alternative splicing</keyword>
<keyword id="KW-0209">Deafness</keyword>
<keyword id="KW-0217">Developmental protein</keyword>
<keyword id="KW-0225">Disease variant</keyword>
<keyword id="KW-0238">DNA-binding</keyword>
<keyword id="KW-0991">Intellectual disability</keyword>
<keyword id="KW-0539">Nucleus</keyword>
<keyword id="KW-0563">Paired box</keyword>
<keyword id="KW-1267">Proteomics identification</keyword>
<keyword id="KW-1185">Reference proteome</keyword>
<keyword id="KW-0804">Transcription</keyword>
<keyword id="KW-0805">Transcription regulation</keyword>
<name>PAX1_HUMAN</name>
<dbReference type="EMBL" id="AK303335">
    <property type="protein sequence ID" value="BAG64398.1"/>
    <property type="molecule type" value="mRNA"/>
</dbReference>
<dbReference type="EMBL" id="AY740018">
    <property type="protein sequence ID" value="AAU21037.1"/>
    <property type="status" value="ALT_INIT"/>
    <property type="molecule type" value="Genomic_DNA"/>
</dbReference>
<dbReference type="EMBL" id="AL035562">
    <property type="status" value="NOT_ANNOTATED_CDS"/>
    <property type="molecule type" value="Genomic_DNA"/>
</dbReference>
<dbReference type="EMBL" id="BC069134">
    <property type="protein sequence ID" value="AAH69134.1"/>
    <property type="status" value="ALT_INIT"/>
    <property type="molecule type" value="mRNA"/>
</dbReference>
<dbReference type="EMBL" id="X15044">
    <property type="protein sequence ID" value="CAA33146.1"/>
    <property type="molecule type" value="Genomic_DNA"/>
</dbReference>
<dbReference type="CCDS" id="CCDS13146.2">
    <molecule id="P15863-1"/>
</dbReference>
<dbReference type="PIR" id="S06961">
    <property type="entry name" value="S06961"/>
</dbReference>
<dbReference type="RefSeq" id="NP_006183.2">
    <molecule id="P15863-1"/>
    <property type="nucleotide sequence ID" value="NM_006192.5"/>
</dbReference>
<dbReference type="SMR" id="P15863"/>
<dbReference type="BioGRID" id="111109">
    <property type="interactions" value="3"/>
</dbReference>
<dbReference type="FunCoup" id="P15863">
    <property type="interactions" value="256"/>
</dbReference>
<dbReference type="MINT" id="P15863"/>
<dbReference type="STRING" id="9606.ENSP00000381499"/>
<dbReference type="GlyGen" id="P15863">
    <property type="glycosylation" value="2 sites"/>
</dbReference>
<dbReference type="iPTMnet" id="P15863"/>
<dbReference type="PhosphoSitePlus" id="P15863"/>
<dbReference type="BioMuta" id="PAX1"/>
<dbReference type="DMDM" id="296439493"/>
<dbReference type="jPOST" id="P15863"/>
<dbReference type="MassIVE" id="P15863"/>
<dbReference type="PaxDb" id="9606-ENSP00000381499"/>
<dbReference type="PeptideAtlas" id="P15863"/>
<dbReference type="ProteomicsDB" id="53230">
    <molecule id="P15863-1"/>
</dbReference>
<dbReference type="ProteomicsDB" id="53231">
    <molecule id="P15863-2"/>
</dbReference>
<dbReference type="ProteomicsDB" id="53232">
    <molecule id="P15863-3"/>
</dbReference>
<dbReference type="Antibodypedia" id="24834">
    <property type="antibodies" value="320 antibodies from 33 providers"/>
</dbReference>
<dbReference type="DNASU" id="5075"/>
<dbReference type="Ensembl" id="ENST00000398485.6">
    <molecule id="P15863-1"/>
    <property type="protein sequence ID" value="ENSP00000381499.2"/>
    <property type="gene ID" value="ENSG00000125813.15"/>
</dbReference>
<dbReference type="Ensembl" id="ENST00000444366.2">
    <molecule id="P15863-2"/>
    <property type="protein sequence ID" value="ENSP00000410355.2"/>
    <property type="gene ID" value="ENSG00000125813.15"/>
</dbReference>
<dbReference type="GeneID" id="5075"/>
<dbReference type="KEGG" id="hsa:5075"/>
<dbReference type="UCSC" id="uc002wsj.4">
    <molecule id="P15863-1"/>
    <property type="organism name" value="human"/>
</dbReference>
<dbReference type="AGR" id="HGNC:8615"/>
<dbReference type="CTD" id="5075"/>
<dbReference type="DisGeNET" id="5075"/>
<dbReference type="GeneCards" id="PAX1"/>
<dbReference type="HGNC" id="HGNC:8615">
    <property type="gene designation" value="PAX1"/>
</dbReference>
<dbReference type="HPA" id="ENSG00000125813">
    <property type="expression patterns" value="Tissue enriched (parathyroid)"/>
</dbReference>
<dbReference type="MalaCards" id="PAX1"/>
<dbReference type="MIM" id="167411">
    <property type="type" value="gene"/>
</dbReference>
<dbReference type="MIM" id="615560">
    <property type="type" value="phenotype"/>
</dbReference>
<dbReference type="neXtProt" id="NX_P15863"/>
<dbReference type="OpenTargets" id="ENSG00000125813"/>
<dbReference type="Orphanet" id="2792">
    <property type="disease" value="Otofaciocervical syndrome"/>
</dbReference>
<dbReference type="PharmGKB" id="PA32955"/>
<dbReference type="VEuPathDB" id="HostDB:ENSG00000125813"/>
<dbReference type="eggNOG" id="KOG3517">
    <property type="taxonomic scope" value="Eukaryota"/>
</dbReference>
<dbReference type="GeneTree" id="ENSGT00940000159137"/>
<dbReference type="HOGENOM" id="CLU_019281_3_1_1"/>
<dbReference type="InParanoid" id="P15863"/>
<dbReference type="OMA" id="MEHTYGE"/>
<dbReference type="OrthoDB" id="6159439at2759"/>
<dbReference type="PAN-GO" id="P15863">
    <property type="GO annotations" value="4 GO annotations based on evolutionary models"/>
</dbReference>
<dbReference type="PhylomeDB" id="P15863"/>
<dbReference type="TreeFam" id="TF315397"/>
<dbReference type="PathwayCommons" id="P15863"/>
<dbReference type="SignaLink" id="P15863"/>
<dbReference type="SIGNOR" id="P15863"/>
<dbReference type="BioGRID-ORCS" id="5075">
    <property type="hits" value="8 hits in 1169 CRISPR screens"/>
</dbReference>
<dbReference type="ChiTaRS" id="PAX1">
    <property type="organism name" value="human"/>
</dbReference>
<dbReference type="GeneWiki" id="PAX1"/>
<dbReference type="GenomeRNAi" id="5075"/>
<dbReference type="Pharos" id="P15863">
    <property type="development level" value="Tbio"/>
</dbReference>
<dbReference type="PRO" id="PR:P15863"/>
<dbReference type="Proteomes" id="UP000005640">
    <property type="component" value="Chromosome 20"/>
</dbReference>
<dbReference type="RNAct" id="P15863">
    <property type="molecule type" value="protein"/>
</dbReference>
<dbReference type="Bgee" id="ENSG00000125813">
    <property type="expression patterns" value="Expressed in thymus and 43 other cell types or tissues"/>
</dbReference>
<dbReference type="ExpressionAtlas" id="P15863">
    <property type="expression patterns" value="baseline and differential"/>
</dbReference>
<dbReference type="GO" id="GO:0000785">
    <property type="term" value="C:chromatin"/>
    <property type="evidence" value="ECO:0000247"/>
    <property type="project" value="NTNU_SB"/>
</dbReference>
<dbReference type="GO" id="GO:0005634">
    <property type="term" value="C:nucleus"/>
    <property type="evidence" value="ECO:0007669"/>
    <property type="project" value="UniProtKB-SubCell"/>
</dbReference>
<dbReference type="GO" id="GO:0000981">
    <property type="term" value="F:DNA-binding transcription factor activity, RNA polymerase II-specific"/>
    <property type="evidence" value="ECO:0000247"/>
    <property type="project" value="NTNU_SB"/>
</dbReference>
<dbReference type="GO" id="GO:0000978">
    <property type="term" value="F:RNA polymerase II cis-regulatory region sequence-specific DNA binding"/>
    <property type="evidence" value="ECO:0000318"/>
    <property type="project" value="GO_Central"/>
</dbReference>
<dbReference type="GO" id="GO:1990837">
    <property type="term" value="F:sequence-specific double-stranded DNA binding"/>
    <property type="evidence" value="ECO:0000314"/>
    <property type="project" value="ARUK-UCL"/>
</dbReference>
<dbReference type="GO" id="GO:0009792">
    <property type="term" value="P:embryo development ending in birth or egg hatching"/>
    <property type="evidence" value="ECO:0000318"/>
    <property type="project" value="GO_Central"/>
</dbReference>
<dbReference type="GO" id="GO:0006357">
    <property type="term" value="P:regulation of transcription by RNA polymerase II"/>
    <property type="evidence" value="ECO:0000318"/>
    <property type="project" value="GO_Central"/>
</dbReference>
<dbReference type="GO" id="GO:0001501">
    <property type="term" value="P:skeletal system development"/>
    <property type="evidence" value="ECO:0000318"/>
    <property type="project" value="GO_Central"/>
</dbReference>
<dbReference type="GO" id="GO:0006366">
    <property type="term" value="P:transcription by RNA polymerase II"/>
    <property type="evidence" value="ECO:0000304"/>
    <property type="project" value="ProtInc"/>
</dbReference>
<dbReference type="CDD" id="cd00131">
    <property type="entry name" value="PAX"/>
    <property type="match status" value="1"/>
</dbReference>
<dbReference type="FunFam" id="1.10.10.10:FF:000003">
    <property type="entry name" value="Paired box protein Pax-6"/>
    <property type="match status" value="1"/>
</dbReference>
<dbReference type="FunFam" id="1.10.10.10:FF:000084">
    <property type="entry name" value="paired box protein Pax-9"/>
    <property type="match status" value="1"/>
</dbReference>
<dbReference type="Gene3D" id="1.10.10.10">
    <property type="entry name" value="Winged helix-like DNA-binding domain superfamily/Winged helix DNA-binding domain"/>
    <property type="match status" value="2"/>
</dbReference>
<dbReference type="InterPro" id="IPR009057">
    <property type="entry name" value="Homeodomain-like_sf"/>
</dbReference>
<dbReference type="InterPro" id="IPR043182">
    <property type="entry name" value="PAIRED_DNA-bd_dom"/>
</dbReference>
<dbReference type="InterPro" id="IPR001523">
    <property type="entry name" value="Paired_dom"/>
</dbReference>
<dbReference type="InterPro" id="IPR043565">
    <property type="entry name" value="PAX_fam"/>
</dbReference>
<dbReference type="InterPro" id="IPR036388">
    <property type="entry name" value="WH-like_DNA-bd_sf"/>
</dbReference>
<dbReference type="PANTHER" id="PTHR45636:SF15">
    <property type="entry name" value="PAIRED BOX PROTEIN PAX-1"/>
    <property type="match status" value="1"/>
</dbReference>
<dbReference type="PANTHER" id="PTHR45636">
    <property type="entry name" value="PAIRED BOX PROTEIN PAX-6-RELATED-RELATED"/>
    <property type="match status" value="1"/>
</dbReference>
<dbReference type="Pfam" id="PF00292">
    <property type="entry name" value="PAX"/>
    <property type="match status" value="1"/>
</dbReference>
<dbReference type="PRINTS" id="PR00027">
    <property type="entry name" value="PAIREDBOX"/>
</dbReference>
<dbReference type="SMART" id="SM00351">
    <property type="entry name" value="PAX"/>
    <property type="match status" value="1"/>
</dbReference>
<dbReference type="SUPFAM" id="SSF46689">
    <property type="entry name" value="Homeodomain-like"/>
    <property type="match status" value="1"/>
</dbReference>
<dbReference type="PROSITE" id="PS00034">
    <property type="entry name" value="PAIRED_1"/>
    <property type="match status" value="1"/>
</dbReference>
<dbReference type="PROSITE" id="PS51057">
    <property type="entry name" value="PAIRED_2"/>
    <property type="match status" value="1"/>
</dbReference>
<reference key="1">
    <citation type="journal article" date="2004" name="Nat. Genet.">
        <title>Complete sequencing and characterization of 21,243 full-length human cDNAs.</title>
        <authorList>
            <person name="Ota T."/>
            <person name="Suzuki Y."/>
            <person name="Nishikawa T."/>
            <person name="Otsuki T."/>
            <person name="Sugiyama T."/>
            <person name="Irie R."/>
            <person name="Wakamatsu A."/>
            <person name="Hayashi K."/>
            <person name="Sato H."/>
            <person name="Nagai K."/>
            <person name="Kimura K."/>
            <person name="Makita H."/>
            <person name="Sekine M."/>
            <person name="Obayashi M."/>
            <person name="Nishi T."/>
            <person name="Shibahara T."/>
            <person name="Tanaka T."/>
            <person name="Ishii S."/>
            <person name="Yamamoto J."/>
            <person name="Saito K."/>
            <person name="Kawai Y."/>
            <person name="Isono Y."/>
            <person name="Nakamura Y."/>
            <person name="Nagahari K."/>
            <person name="Murakami K."/>
            <person name="Yasuda T."/>
            <person name="Iwayanagi T."/>
            <person name="Wagatsuma M."/>
            <person name="Shiratori A."/>
            <person name="Sudo H."/>
            <person name="Hosoiri T."/>
            <person name="Kaku Y."/>
            <person name="Kodaira H."/>
            <person name="Kondo H."/>
            <person name="Sugawara M."/>
            <person name="Takahashi M."/>
            <person name="Kanda K."/>
            <person name="Yokoi T."/>
            <person name="Furuya T."/>
            <person name="Kikkawa E."/>
            <person name="Omura Y."/>
            <person name="Abe K."/>
            <person name="Kamihara K."/>
            <person name="Katsuta N."/>
            <person name="Sato K."/>
            <person name="Tanikawa M."/>
            <person name="Yamazaki M."/>
            <person name="Ninomiya K."/>
            <person name="Ishibashi T."/>
            <person name="Yamashita H."/>
            <person name="Murakawa K."/>
            <person name="Fujimori K."/>
            <person name="Tanai H."/>
            <person name="Kimata M."/>
            <person name="Watanabe M."/>
            <person name="Hiraoka S."/>
            <person name="Chiba Y."/>
            <person name="Ishida S."/>
            <person name="Ono Y."/>
            <person name="Takiguchi S."/>
            <person name="Watanabe S."/>
            <person name="Yosida M."/>
            <person name="Hotuta T."/>
            <person name="Kusano J."/>
            <person name="Kanehori K."/>
            <person name="Takahashi-Fujii A."/>
            <person name="Hara H."/>
            <person name="Tanase T.-O."/>
            <person name="Nomura Y."/>
            <person name="Togiya S."/>
            <person name="Komai F."/>
            <person name="Hara R."/>
            <person name="Takeuchi K."/>
            <person name="Arita M."/>
            <person name="Imose N."/>
            <person name="Musashino K."/>
            <person name="Yuuki H."/>
            <person name="Oshima A."/>
            <person name="Sasaki N."/>
            <person name="Aotsuka S."/>
            <person name="Yoshikawa Y."/>
            <person name="Matsunawa H."/>
            <person name="Ichihara T."/>
            <person name="Shiohata N."/>
            <person name="Sano S."/>
            <person name="Moriya S."/>
            <person name="Momiyama H."/>
            <person name="Satoh N."/>
            <person name="Takami S."/>
            <person name="Terashima Y."/>
            <person name="Suzuki O."/>
            <person name="Nakagawa S."/>
            <person name="Senoh A."/>
            <person name="Mizoguchi H."/>
            <person name="Goto Y."/>
            <person name="Shimizu F."/>
            <person name="Wakebe H."/>
            <person name="Hishigaki H."/>
            <person name="Watanabe T."/>
            <person name="Sugiyama A."/>
            <person name="Takemoto M."/>
            <person name="Kawakami B."/>
            <person name="Yamazaki M."/>
            <person name="Watanabe K."/>
            <person name="Kumagai A."/>
            <person name="Itakura S."/>
            <person name="Fukuzumi Y."/>
            <person name="Fujimori Y."/>
            <person name="Komiyama M."/>
            <person name="Tashiro H."/>
            <person name="Tanigami A."/>
            <person name="Fujiwara T."/>
            <person name="Ono T."/>
            <person name="Yamada K."/>
            <person name="Fujii Y."/>
            <person name="Ozaki K."/>
            <person name="Hirao M."/>
            <person name="Ohmori Y."/>
            <person name="Kawabata A."/>
            <person name="Hikiji T."/>
            <person name="Kobatake N."/>
            <person name="Inagaki H."/>
            <person name="Ikema Y."/>
            <person name="Okamoto S."/>
            <person name="Okitani R."/>
            <person name="Kawakami T."/>
            <person name="Noguchi S."/>
            <person name="Itoh T."/>
            <person name="Shigeta K."/>
            <person name="Senba T."/>
            <person name="Matsumura K."/>
            <person name="Nakajima Y."/>
            <person name="Mizuno T."/>
            <person name="Morinaga M."/>
            <person name="Sasaki M."/>
            <person name="Togashi T."/>
            <person name="Oyama M."/>
            <person name="Hata H."/>
            <person name="Watanabe M."/>
            <person name="Komatsu T."/>
            <person name="Mizushima-Sugano J."/>
            <person name="Satoh T."/>
            <person name="Shirai Y."/>
            <person name="Takahashi Y."/>
            <person name="Nakagawa K."/>
            <person name="Okumura K."/>
            <person name="Nagase T."/>
            <person name="Nomura N."/>
            <person name="Kikuchi H."/>
            <person name="Masuho Y."/>
            <person name="Yamashita R."/>
            <person name="Nakai K."/>
            <person name="Yada T."/>
            <person name="Nakamura Y."/>
            <person name="Ohara O."/>
            <person name="Isogai T."/>
            <person name="Sugano S."/>
        </authorList>
    </citation>
    <scope>NUCLEOTIDE SEQUENCE [LARGE SCALE MRNA] (ISOFORM 2)</scope>
    <source>
        <tissue>Thymus</tissue>
    </source>
</reference>
<reference key="2">
    <citation type="submission" date="2004-09" db="EMBL/GenBank/DDBJ databases">
        <authorList>
            <consortium name="NIEHS SNPs program"/>
        </authorList>
    </citation>
    <scope>NUCLEOTIDE SEQUENCE [GENOMIC DNA] (ISOFORM 3)</scope>
    <scope>VARIANTS ARG-439; LEU-453 AND LEU-504</scope>
</reference>
<reference key="3">
    <citation type="journal article" date="2001" name="Nature">
        <title>The DNA sequence and comparative analysis of human chromosome 20.</title>
        <authorList>
            <person name="Deloukas P."/>
            <person name="Matthews L.H."/>
            <person name="Ashurst J.L."/>
            <person name="Burton J."/>
            <person name="Gilbert J.G.R."/>
            <person name="Jones M."/>
            <person name="Stavrides G."/>
            <person name="Almeida J.P."/>
            <person name="Babbage A.K."/>
            <person name="Bagguley C.L."/>
            <person name="Bailey J."/>
            <person name="Barlow K.F."/>
            <person name="Bates K.N."/>
            <person name="Beard L.M."/>
            <person name="Beare D.M."/>
            <person name="Beasley O.P."/>
            <person name="Bird C.P."/>
            <person name="Blakey S.E."/>
            <person name="Bridgeman A.M."/>
            <person name="Brown A.J."/>
            <person name="Buck D."/>
            <person name="Burrill W.D."/>
            <person name="Butler A.P."/>
            <person name="Carder C."/>
            <person name="Carter N.P."/>
            <person name="Chapman J.C."/>
            <person name="Clamp M."/>
            <person name="Clark G."/>
            <person name="Clark L.N."/>
            <person name="Clark S.Y."/>
            <person name="Clee C.M."/>
            <person name="Clegg S."/>
            <person name="Cobley V.E."/>
            <person name="Collier R.E."/>
            <person name="Connor R.E."/>
            <person name="Corby N.R."/>
            <person name="Coulson A."/>
            <person name="Coville G.J."/>
            <person name="Deadman R."/>
            <person name="Dhami P.D."/>
            <person name="Dunn M."/>
            <person name="Ellington A.G."/>
            <person name="Frankland J.A."/>
            <person name="Fraser A."/>
            <person name="French L."/>
            <person name="Garner P."/>
            <person name="Grafham D.V."/>
            <person name="Griffiths C."/>
            <person name="Griffiths M.N.D."/>
            <person name="Gwilliam R."/>
            <person name="Hall R.E."/>
            <person name="Hammond S."/>
            <person name="Harley J.L."/>
            <person name="Heath P.D."/>
            <person name="Ho S."/>
            <person name="Holden J.L."/>
            <person name="Howden P.J."/>
            <person name="Huckle E."/>
            <person name="Hunt A.R."/>
            <person name="Hunt S.E."/>
            <person name="Jekosch K."/>
            <person name="Johnson C.M."/>
            <person name="Johnson D."/>
            <person name="Kay M.P."/>
            <person name="Kimberley A.M."/>
            <person name="King A."/>
            <person name="Knights A."/>
            <person name="Laird G.K."/>
            <person name="Lawlor S."/>
            <person name="Lehvaeslaiho M.H."/>
            <person name="Leversha M.A."/>
            <person name="Lloyd C."/>
            <person name="Lloyd D.M."/>
            <person name="Lovell J.D."/>
            <person name="Marsh V.L."/>
            <person name="Martin S.L."/>
            <person name="McConnachie L.J."/>
            <person name="McLay K."/>
            <person name="McMurray A.A."/>
            <person name="Milne S.A."/>
            <person name="Mistry D."/>
            <person name="Moore M.J.F."/>
            <person name="Mullikin J.C."/>
            <person name="Nickerson T."/>
            <person name="Oliver K."/>
            <person name="Parker A."/>
            <person name="Patel R."/>
            <person name="Pearce T.A.V."/>
            <person name="Peck A.I."/>
            <person name="Phillimore B.J.C.T."/>
            <person name="Prathalingam S.R."/>
            <person name="Plumb R.W."/>
            <person name="Ramsay H."/>
            <person name="Rice C.M."/>
            <person name="Ross M.T."/>
            <person name="Scott C.E."/>
            <person name="Sehra H.K."/>
            <person name="Shownkeen R."/>
            <person name="Sims S."/>
            <person name="Skuce C.D."/>
            <person name="Smith M.L."/>
            <person name="Soderlund C."/>
            <person name="Steward C.A."/>
            <person name="Sulston J.E."/>
            <person name="Swann R.M."/>
            <person name="Sycamore N."/>
            <person name="Taylor R."/>
            <person name="Tee L."/>
            <person name="Thomas D.W."/>
            <person name="Thorpe A."/>
            <person name="Tracey A."/>
            <person name="Tromans A.C."/>
            <person name="Vaudin M."/>
            <person name="Wall M."/>
            <person name="Wallis J.M."/>
            <person name="Whitehead S.L."/>
            <person name="Whittaker P."/>
            <person name="Willey D.L."/>
            <person name="Williams L."/>
            <person name="Williams S.A."/>
            <person name="Wilming L."/>
            <person name="Wray P.W."/>
            <person name="Hubbard T."/>
            <person name="Durbin R.M."/>
            <person name="Bentley D.R."/>
            <person name="Beck S."/>
            <person name="Rogers J."/>
        </authorList>
    </citation>
    <scope>NUCLEOTIDE SEQUENCE [LARGE SCALE GENOMIC DNA]</scope>
</reference>
<reference key="4">
    <citation type="journal article" date="2004" name="Genome Res.">
        <title>The status, quality, and expansion of the NIH full-length cDNA project: the Mammalian Gene Collection (MGC).</title>
        <authorList>
            <consortium name="The MGC Project Team"/>
        </authorList>
    </citation>
    <scope>NUCLEOTIDE SEQUENCE [LARGE SCALE MRNA] OF 95-534 (ISOFORM 1)</scope>
</reference>
<reference key="5">
    <citation type="journal article" date="1989" name="EMBO J.">
        <title>Conservation of the paired domain in metazoans and its structure in three isolated human genes.</title>
        <authorList>
            <person name="Burri M."/>
            <person name="Tromvoukis Y."/>
            <person name="Bopp D."/>
            <person name="Frigerio G."/>
            <person name="Noll M."/>
        </authorList>
    </citation>
    <scope>PARTIAL NUCLEOTIDE SEQUENCE [GENOMIC DNA] (ISOFORM 2/3)</scope>
</reference>
<reference key="6">
    <citation type="journal article" date="2011" name="Sci. Signal.">
        <title>System-wide temporal characterization of the proteome and phosphoproteome of human embryonic stem cell differentiation.</title>
        <authorList>
            <person name="Rigbolt K.T."/>
            <person name="Prokhorova T.A."/>
            <person name="Akimov V."/>
            <person name="Henningsen J."/>
            <person name="Johansen P.T."/>
            <person name="Kratchmarova I."/>
            <person name="Kassem M."/>
            <person name="Mann M."/>
            <person name="Olsen J.V."/>
            <person name="Blagoev B."/>
        </authorList>
    </citation>
    <scope>IDENTIFICATION BY MASS SPECTROMETRY [LARGE SCALE ANALYSIS]</scope>
</reference>
<reference key="7">
    <citation type="journal article" date="1996" name="J. Med. Genet.">
        <title>PAX genes and human neural tube defects: an amino acid substitution in PAX1 in a patient with spina bifida.</title>
        <authorList>
            <person name="Hol F.A."/>
            <person name="Geurds M.P.A."/>
            <person name="Chatkupt S."/>
            <person name="Shugart Y.Y."/>
            <person name="Balling R."/>
            <person name="Schrander-Stumpel C.T.R.M."/>
            <person name="Johnson W.G."/>
            <person name="Hamel B.C.J."/>
            <person name="Mariman E.C.M."/>
        </authorList>
    </citation>
    <scope>VARIANT HIS-139</scope>
</reference>
<reference key="8">
    <citation type="journal article" date="2013" name="Hum. Genet.">
        <title>A hypofunctional PAX1 mutation causes autosomal recessively inherited otofaciocervical syndrome.</title>
        <authorList>
            <person name="Pohl E."/>
            <person name="Aykut A."/>
            <person name="Beleggia F."/>
            <person name="Karaca E."/>
            <person name="Durmaz B."/>
            <person name="Keupp K."/>
            <person name="Arslan E."/>
            <person name="Palamar M."/>
            <person name="Onay M.P."/>
            <person name="Yigit G."/>
            <person name="Ozkinay F."/>
            <person name="Wollnik B."/>
        </authorList>
    </citation>
    <scope>VARIANT OTFCS2 VAL-166</scope>
    <scope>CHARACTERIZATION OF VARIANT OTFCS2 VAL-166</scope>
</reference>